<protein>
    <recommendedName>
        <fullName evidence="4">Aspartate ammonia-lyase</fullName>
        <shortName evidence="4">Aspartase</shortName>
        <ecNumber evidence="3">4.3.1.1</ecNumber>
    </recommendedName>
    <alternativeName>
        <fullName evidence="4">PA-AspA</fullName>
    </alternativeName>
</protein>
<organism>
    <name type="scientific">Pseudomonas aeruginosa (strain ATCC 15692 / DSM 22644 / CIP 104116 / JCM 14847 / LMG 12228 / 1C / PRS 101 / PAO1)</name>
    <dbReference type="NCBI Taxonomy" id="208964"/>
    <lineage>
        <taxon>Bacteria</taxon>
        <taxon>Pseudomonadati</taxon>
        <taxon>Pseudomonadota</taxon>
        <taxon>Gammaproteobacteria</taxon>
        <taxon>Pseudomonadales</taxon>
        <taxon>Pseudomonadaceae</taxon>
        <taxon>Pseudomonas</taxon>
    </lineage>
</organism>
<dbReference type="EC" id="4.3.1.1" evidence="3"/>
<dbReference type="EMBL" id="AE004091">
    <property type="protein sequence ID" value="AAG08814.1"/>
    <property type="molecule type" value="Genomic_DNA"/>
</dbReference>
<dbReference type="PIR" id="C82968">
    <property type="entry name" value="C82968"/>
</dbReference>
<dbReference type="RefSeq" id="NP_254116.1">
    <property type="nucleotide sequence ID" value="NC_002516.2"/>
</dbReference>
<dbReference type="RefSeq" id="WP_003096822.1">
    <property type="nucleotide sequence ID" value="NZ_QZGE01000012.1"/>
</dbReference>
<dbReference type="SMR" id="Q9HTD7"/>
<dbReference type="FunCoup" id="Q9HTD7">
    <property type="interactions" value="157"/>
</dbReference>
<dbReference type="STRING" id="208964.PA5429"/>
<dbReference type="PaxDb" id="208964-PA5429"/>
<dbReference type="GeneID" id="878603"/>
<dbReference type="KEGG" id="pae:PA5429"/>
<dbReference type="PATRIC" id="fig|208964.12.peg.5690"/>
<dbReference type="PseudoCAP" id="PA5429"/>
<dbReference type="HOGENOM" id="CLU_021594_4_1_6"/>
<dbReference type="InParanoid" id="Q9HTD7"/>
<dbReference type="OrthoDB" id="9802809at2"/>
<dbReference type="PhylomeDB" id="Q9HTD7"/>
<dbReference type="BioCyc" id="PAER208964:G1FZ6-5556-MONOMER"/>
<dbReference type="BRENDA" id="4.3.1.1">
    <property type="organism ID" value="5087"/>
</dbReference>
<dbReference type="Proteomes" id="UP000002438">
    <property type="component" value="Chromosome"/>
</dbReference>
<dbReference type="GO" id="GO:0005829">
    <property type="term" value="C:cytosol"/>
    <property type="evidence" value="ECO:0000318"/>
    <property type="project" value="GO_Central"/>
</dbReference>
<dbReference type="GO" id="GO:0008797">
    <property type="term" value="F:aspartate ammonia-lyase activity"/>
    <property type="evidence" value="ECO:0000318"/>
    <property type="project" value="GO_Central"/>
</dbReference>
<dbReference type="GO" id="GO:0045548">
    <property type="term" value="F:phenylalanine ammonia-lyase activity"/>
    <property type="evidence" value="ECO:0007669"/>
    <property type="project" value="RHEA"/>
</dbReference>
<dbReference type="GO" id="GO:0006531">
    <property type="term" value="P:aspartate metabolic process"/>
    <property type="evidence" value="ECO:0000318"/>
    <property type="project" value="GO_Central"/>
</dbReference>
<dbReference type="GO" id="GO:0006099">
    <property type="term" value="P:tricarboxylic acid cycle"/>
    <property type="evidence" value="ECO:0007669"/>
    <property type="project" value="InterPro"/>
</dbReference>
<dbReference type="CDD" id="cd01357">
    <property type="entry name" value="Aspartase"/>
    <property type="match status" value="1"/>
</dbReference>
<dbReference type="FunFam" id="1.10.40.30:FF:000002">
    <property type="entry name" value="Fumarate hydratase class II"/>
    <property type="match status" value="1"/>
</dbReference>
<dbReference type="FunFam" id="1.10.275.10:FF:000001">
    <property type="entry name" value="Fumarate hydratase, mitochondrial"/>
    <property type="match status" value="1"/>
</dbReference>
<dbReference type="FunFam" id="1.20.200.10:FF:000001">
    <property type="entry name" value="Fumarate hydratase, mitochondrial"/>
    <property type="match status" value="1"/>
</dbReference>
<dbReference type="Gene3D" id="1.10.40.30">
    <property type="entry name" value="Fumarase/aspartase (C-terminal domain)"/>
    <property type="match status" value="1"/>
</dbReference>
<dbReference type="Gene3D" id="1.20.200.10">
    <property type="entry name" value="Fumarase/aspartase (Central domain)"/>
    <property type="match status" value="1"/>
</dbReference>
<dbReference type="Gene3D" id="1.10.275.10">
    <property type="entry name" value="Fumarase/aspartase (N-terminal domain)"/>
    <property type="match status" value="1"/>
</dbReference>
<dbReference type="InterPro" id="IPR004708">
    <property type="entry name" value="ApsA"/>
</dbReference>
<dbReference type="InterPro" id="IPR051546">
    <property type="entry name" value="Aspartate_Ammonia-Lyase"/>
</dbReference>
<dbReference type="InterPro" id="IPR024083">
    <property type="entry name" value="Fumarase/histidase_N"/>
</dbReference>
<dbReference type="InterPro" id="IPR018951">
    <property type="entry name" value="Fumarase_C_C"/>
</dbReference>
<dbReference type="InterPro" id="IPR020557">
    <property type="entry name" value="Fumarate_lyase_CS"/>
</dbReference>
<dbReference type="InterPro" id="IPR000362">
    <property type="entry name" value="Fumarate_lyase_fam"/>
</dbReference>
<dbReference type="InterPro" id="IPR022761">
    <property type="entry name" value="Fumarate_lyase_N"/>
</dbReference>
<dbReference type="InterPro" id="IPR008948">
    <property type="entry name" value="L-Aspartase-like"/>
</dbReference>
<dbReference type="NCBIfam" id="TIGR00839">
    <property type="entry name" value="aspA"/>
    <property type="match status" value="1"/>
</dbReference>
<dbReference type="NCBIfam" id="NF008909">
    <property type="entry name" value="PRK12273.1"/>
    <property type="match status" value="1"/>
</dbReference>
<dbReference type="PANTHER" id="PTHR42696">
    <property type="entry name" value="ASPARTATE AMMONIA-LYASE"/>
    <property type="match status" value="1"/>
</dbReference>
<dbReference type="PANTHER" id="PTHR42696:SF2">
    <property type="entry name" value="ASPARTATE AMMONIA-LYASE"/>
    <property type="match status" value="1"/>
</dbReference>
<dbReference type="Pfam" id="PF10415">
    <property type="entry name" value="FumaraseC_C"/>
    <property type="match status" value="1"/>
</dbReference>
<dbReference type="Pfam" id="PF00206">
    <property type="entry name" value="Lyase_1"/>
    <property type="match status" value="1"/>
</dbReference>
<dbReference type="PRINTS" id="PR00149">
    <property type="entry name" value="FUMRATELYASE"/>
</dbReference>
<dbReference type="SUPFAM" id="SSF48557">
    <property type="entry name" value="L-aspartase-like"/>
    <property type="match status" value="1"/>
</dbReference>
<dbReference type="PROSITE" id="PS00163">
    <property type="entry name" value="FUMARATE_LYASES"/>
    <property type="match status" value="1"/>
</dbReference>
<feature type="chain" id="PRO_0000287771" description="Aspartate ammonia-lyase">
    <location>
        <begin position="1"/>
        <end position="474"/>
    </location>
</feature>
<feature type="region of interest" description="SS loop" evidence="2">
    <location>
        <begin position="322"/>
        <end position="331"/>
    </location>
</feature>
<feature type="active site" description="Proton acceptor" evidence="2">
    <location>
        <position position="323"/>
    </location>
</feature>
<feature type="binding site" evidence="2">
    <location>
        <position position="105"/>
    </location>
    <ligand>
        <name>L-aspartate</name>
        <dbReference type="ChEBI" id="CHEBI:29991"/>
    </ligand>
</feature>
<feature type="binding site" evidence="2">
    <location>
        <position position="144"/>
    </location>
    <ligand>
        <name>L-aspartate</name>
        <dbReference type="ChEBI" id="CHEBI:29991"/>
    </ligand>
</feature>
<feature type="binding site" evidence="2">
    <location>
        <position position="145"/>
    </location>
    <ligand>
        <name>L-aspartate</name>
        <dbReference type="ChEBI" id="CHEBI:29991"/>
    </ligand>
</feature>
<feature type="binding site" evidence="2">
    <location>
        <position position="146"/>
    </location>
    <ligand>
        <name>L-aspartate</name>
        <dbReference type="ChEBI" id="CHEBI:29991"/>
    </ligand>
</feature>
<feature type="binding site" evidence="2">
    <location>
        <position position="191"/>
    </location>
    <ligand>
        <name>L-aspartate</name>
        <dbReference type="ChEBI" id="CHEBI:29991"/>
    </ligand>
</feature>
<feature type="binding site" evidence="2">
    <location>
        <position position="324"/>
    </location>
    <ligand>
        <name>L-aspartate</name>
        <dbReference type="ChEBI" id="CHEBI:29991"/>
    </ligand>
</feature>
<feature type="binding site" evidence="2">
    <location>
        <position position="329"/>
    </location>
    <ligand>
        <name>L-aspartate</name>
        <dbReference type="ChEBI" id="CHEBI:29991"/>
    </ligand>
</feature>
<reference key="1">
    <citation type="journal article" date="2000" name="Nature">
        <title>Complete genome sequence of Pseudomonas aeruginosa PAO1, an opportunistic pathogen.</title>
        <authorList>
            <person name="Stover C.K."/>
            <person name="Pham X.-Q.T."/>
            <person name="Erwin A.L."/>
            <person name="Mizoguchi S.D."/>
            <person name="Warrener P."/>
            <person name="Hickey M.J."/>
            <person name="Brinkman F.S.L."/>
            <person name="Hufnagle W.O."/>
            <person name="Kowalik D.J."/>
            <person name="Lagrou M."/>
            <person name="Garber R.L."/>
            <person name="Goltry L."/>
            <person name="Tolentino E."/>
            <person name="Westbrock-Wadman S."/>
            <person name="Yuan Y."/>
            <person name="Brody L.L."/>
            <person name="Coulter S.N."/>
            <person name="Folger K.R."/>
            <person name="Kas A."/>
            <person name="Larbig K."/>
            <person name="Lim R.M."/>
            <person name="Smith K.A."/>
            <person name="Spencer D.H."/>
            <person name="Wong G.K.-S."/>
            <person name="Wu Z."/>
            <person name="Paulsen I.T."/>
            <person name="Reizer J."/>
            <person name="Saier M.H. Jr."/>
            <person name="Hancock R.E.W."/>
            <person name="Lory S."/>
            <person name="Olson M.V."/>
        </authorList>
    </citation>
    <scope>NUCLEOTIDE SEQUENCE [LARGE SCALE GENOMIC DNA]</scope>
    <source>
        <strain>ATCC 15692 / DSM 22644 / CIP 104116 / JCM 14847 / LMG 12228 / 1C / PRS 101 / PAO1</strain>
    </source>
</reference>
<reference key="2">
    <citation type="journal article" date="2017" name="Appl. Biochem. Biotechnol.">
        <title>Bioproduction of L-Aspartic Acid and Cinnamic Acid by L-Aspartate Ammonia Lyase from Pseudomonas aeruginosa PAO1.</title>
        <authorList>
            <person name="Patel A.T."/>
            <person name="Akhani R.C."/>
            <person name="Patel M.J."/>
            <person name="Dedania S.R."/>
            <person name="Patel D.H."/>
        </authorList>
    </citation>
    <scope>FUNCTION</scope>
    <scope>CATALYTIC ACTIVITY</scope>
    <scope>ACTIVITY REGULATION</scope>
    <scope>BIOPHYSICOCHEMICAL PROPERTIES</scope>
    <scope>BIOTECHNOLOGY</scope>
    <source>
        <strain>ATCC 15692 / DSM 22644 / CIP 104116 / JCM 14847 / LMG 12228 / 1C / PRS 101 / PAO1</strain>
    </source>
</reference>
<evidence type="ECO:0000250" key="1">
    <source>
        <dbReference type="UniProtKB" id="P0AC38"/>
    </source>
</evidence>
<evidence type="ECO:0000250" key="2">
    <source>
        <dbReference type="UniProtKB" id="Q9LCC6"/>
    </source>
</evidence>
<evidence type="ECO:0000269" key="3">
    <source>
    </source>
</evidence>
<evidence type="ECO:0000303" key="4">
    <source>
    </source>
</evidence>
<evidence type="ECO:0000305" key="5"/>
<sequence>MSPVASSRIEKDLLGTLEVPADAYYGIQTLRAVNNFRLSGVPLSHYPKLVVALAMVKQAAADANRQLGHLPEDKHAAISEACARLIRGDFHEQFVVDMIQGGAGTSTNMNANEVIANIALEAMGHTKGEYKYLHPNNDVNMAQSTNDAYPTAIRLGLLLGHDTLLASLDSLIQAFAAKGVEFAGVLKMGRTQLQDAVPMTLGQEFHAFATTLGEDLDRLRRLAPELLTEVNLGGTAIGTGINADPGYQKLAVERLAAISGQPLKPAADLIEATSDMGAFVLFSGMLKRTAVKLSKICNDLRLLSSGPRTGINEINLPPRQPGSSIMPGKVNPVIPEAVNQVAFEVIGNDLALTLAAEGGQLQLNVMEPLIAYKIFDSIRLLQRAMDMLREHCITGITANVERCHELVEHSIGLVTALNPYIGYENSTRIAKTALESGRGVLELVREEKLLDEATLADILLPENMIAPRLIPLRA</sequence>
<proteinExistence type="evidence at protein level"/>
<comment type="function">
    <text evidence="3">Catalyzes the reversible conversion of L-aspartate to fumarate and ammonia (PubMed:27988856). Can also utilize L-phenylalanine to form cinnamic acid (PubMed:27988856). Exhibits the highest specific activity towards L-phenylalanine, but catalytic efficiency is 3-fold higher with L-aspartate (PubMed:27988856).</text>
</comment>
<comment type="catalytic activity">
    <reaction evidence="3">
        <text>L-aspartate = fumarate + NH4(+)</text>
        <dbReference type="Rhea" id="RHEA:16601"/>
        <dbReference type="ChEBI" id="CHEBI:28938"/>
        <dbReference type="ChEBI" id="CHEBI:29806"/>
        <dbReference type="ChEBI" id="CHEBI:29991"/>
        <dbReference type="EC" id="4.3.1.1"/>
    </reaction>
</comment>
<comment type="catalytic activity">
    <reaction evidence="3">
        <text>L-phenylalanine = (E)-cinnamate + NH4(+)</text>
        <dbReference type="Rhea" id="RHEA:21384"/>
        <dbReference type="ChEBI" id="CHEBI:15669"/>
        <dbReference type="ChEBI" id="CHEBI:28938"/>
        <dbReference type="ChEBI" id="CHEBI:58095"/>
    </reaction>
</comment>
<comment type="activity regulation">
    <text evidence="3">Does not require any divalent metal ion for activation of catalysis, but the activity is slightly increased in the presence of Mg(2+), Mn(2+), Ca(2+) or Co(2+).</text>
</comment>
<comment type="biophysicochemical properties">
    <kinetics>
        <KM evidence="3">0.346 uM for L-aspartate</KM>
        <KM evidence="3">1.719 mM for L-phenylalanine</KM>
        <KM evidence="3">21233 mM for fumarate</KM>
        <text evidence="3">kcat is 4.908 sec(-1) with L-aspartate as substrate. kcat is 8.002 sec(-1) with L-phenylalanine as substrate. kcat is 13.64 sec(-1) with fumarate as substrate.</text>
    </kinetics>
    <phDependence>
        <text evidence="3">Optimum pH is 8.0.</text>
    </phDependence>
    <temperatureDependence>
        <text evidence="3">Optimum temperature is 35 degrees Celsius (PubMed:27988856). Retains 80% activity at 15 degrees Celsius (PubMed:27988856). Shows very high thermal stability, and retains about 56% of its activity after 7 days of incubation at 35 degrees Celsius (PubMed:27988856).</text>
    </temperatureDependence>
</comment>
<comment type="subunit">
    <text evidence="1">Homotetramer.</text>
</comment>
<comment type="biotechnology">
    <text evidence="3">Catalytic efficiency establishes PA-AspA as an efficient enzyme for the production of the industrially important substances L-aspartate and cinnamic acid (PubMed:27988856). Catalytic efficiency can be enhanced through protein engineering and enzyme immobilization which can improve the production ratio (PubMed:27988856).</text>
</comment>
<comment type="similarity">
    <text evidence="5">Belongs to the class-II fumarase/aspartase family. Aspartase subfamily.</text>
</comment>
<gene>
    <name evidence="4" type="primary">aspA</name>
    <name type="ordered locus">PA5429</name>
</gene>
<accession>Q9HTD7</accession>
<keyword id="KW-0456">Lyase</keyword>
<keyword id="KW-1185">Reference proteome</keyword>
<name>ASPA_PSEAE</name>